<evidence type="ECO:0000255" key="1">
    <source>
        <dbReference type="HAMAP-Rule" id="MF_00676"/>
    </source>
</evidence>
<dbReference type="EMBL" id="CP000009">
    <property type="protein sequence ID" value="AAW61157.1"/>
    <property type="molecule type" value="Genomic_DNA"/>
</dbReference>
<dbReference type="RefSeq" id="WP_011252944.1">
    <property type="nucleotide sequence ID" value="NZ_LT900338.1"/>
</dbReference>
<dbReference type="STRING" id="290633.GOX1406"/>
<dbReference type="KEGG" id="gox:GOX1406"/>
<dbReference type="eggNOG" id="COG2983">
    <property type="taxonomic scope" value="Bacteria"/>
</dbReference>
<dbReference type="HOGENOM" id="CLU_109769_1_0_5"/>
<dbReference type="Proteomes" id="UP000006375">
    <property type="component" value="Chromosome"/>
</dbReference>
<dbReference type="HAMAP" id="MF_00676">
    <property type="entry name" value="UPF0260"/>
    <property type="match status" value="1"/>
</dbReference>
<dbReference type="InterPro" id="IPR005358">
    <property type="entry name" value="Puta_zinc/iron-chelating_dom"/>
</dbReference>
<dbReference type="InterPro" id="IPR008228">
    <property type="entry name" value="UCP006173"/>
</dbReference>
<dbReference type="NCBIfam" id="NF003501">
    <property type="entry name" value="PRK05170.1-5"/>
    <property type="match status" value="1"/>
</dbReference>
<dbReference type="NCBIfam" id="NF003507">
    <property type="entry name" value="PRK05170.2-5"/>
    <property type="match status" value="1"/>
</dbReference>
<dbReference type="PANTHER" id="PTHR37421">
    <property type="entry name" value="UPF0260 PROTEIN YCGN"/>
    <property type="match status" value="1"/>
</dbReference>
<dbReference type="PANTHER" id="PTHR37421:SF1">
    <property type="entry name" value="UPF0260 PROTEIN YCGN"/>
    <property type="match status" value="1"/>
</dbReference>
<dbReference type="Pfam" id="PF03692">
    <property type="entry name" value="CxxCxxCC"/>
    <property type="match status" value="1"/>
</dbReference>
<dbReference type="PIRSF" id="PIRSF006173">
    <property type="entry name" value="UCP006173"/>
    <property type="match status" value="1"/>
</dbReference>
<proteinExistence type="inferred from homology"/>
<accession>Q5FR39</accession>
<feature type="chain" id="PRO_1000044794" description="UPF0260 protein GOX1406">
    <location>
        <begin position="1"/>
        <end position="163"/>
    </location>
</feature>
<keyword id="KW-1185">Reference proteome</keyword>
<protein>
    <recommendedName>
        <fullName evidence="1">UPF0260 protein GOX1406</fullName>
    </recommendedName>
</protein>
<gene>
    <name type="ordered locus">GOX1406</name>
</gene>
<comment type="similarity">
    <text evidence="1">Belongs to the UPF0260 family.</text>
</comment>
<sequence length="163" mass="18626">MTSPTAPFWQTVPLDQMSSEQWESLCDGCGRCCLNKLRDEDTEEVIYTNVACRLLDTHTCRCTDYADRHRKVPDCVTLTPELLAEIDWLPPSCSYRLLRDGFDLPDWHPLRTGNEKGVHSSGASVQDRCISERRAGPLEDHLEDWPGEWPDRSPLCHALKRKG</sequence>
<organism>
    <name type="scientific">Gluconobacter oxydans (strain 621H)</name>
    <name type="common">Gluconobacter suboxydans</name>
    <dbReference type="NCBI Taxonomy" id="290633"/>
    <lineage>
        <taxon>Bacteria</taxon>
        <taxon>Pseudomonadati</taxon>
        <taxon>Pseudomonadota</taxon>
        <taxon>Alphaproteobacteria</taxon>
        <taxon>Acetobacterales</taxon>
        <taxon>Acetobacteraceae</taxon>
        <taxon>Gluconobacter</taxon>
    </lineage>
</organism>
<name>Y1406_GLUOX</name>
<reference key="1">
    <citation type="journal article" date="2005" name="Nat. Biotechnol.">
        <title>Complete genome sequence of the acetic acid bacterium Gluconobacter oxydans.</title>
        <authorList>
            <person name="Prust C."/>
            <person name="Hoffmeister M."/>
            <person name="Liesegang H."/>
            <person name="Wiezer A."/>
            <person name="Fricke W.F."/>
            <person name="Ehrenreich A."/>
            <person name="Gottschalk G."/>
            <person name="Deppenmeier U."/>
        </authorList>
    </citation>
    <scope>NUCLEOTIDE SEQUENCE [LARGE SCALE GENOMIC DNA]</scope>
    <source>
        <strain>621H</strain>
    </source>
</reference>